<comment type="function">
    <text evidence="1">DNA ligase that catalyzes the formation of phosphodiester linkages between 5'-phosphoryl and 3'-hydroxyl groups in double-stranded DNA using NAD as a coenzyme and as the energy source for the reaction. It is essential for DNA replication and repair of damaged DNA.</text>
</comment>
<comment type="catalytic activity">
    <reaction evidence="1">
        <text>NAD(+) + (deoxyribonucleotide)n-3'-hydroxyl + 5'-phospho-(deoxyribonucleotide)m = (deoxyribonucleotide)n+m + AMP + beta-nicotinamide D-nucleotide.</text>
        <dbReference type="EC" id="6.5.1.2"/>
    </reaction>
</comment>
<comment type="cofactor">
    <cofactor evidence="1">
        <name>Mg(2+)</name>
        <dbReference type="ChEBI" id="CHEBI:18420"/>
    </cofactor>
    <cofactor evidence="1">
        <name>Mn(2+)</name>
        <dbReference type="ChEBI" id="CHEBI:29035"/>
    </cofactor>
</comment>
<comment type="similarity">
    <text evidence="1">Belongs to the NAD-dependent DNA ligase family. LigA subfamily.</text>
</comment>
<keyword id="KW-0227">DNA damage</keyword>
<keyword id="KW-0234">DNA repair</keyword>
<keyword id="KW-0235">DNA replication</keyword>
<keyword id="KW-0436">Ligase</keyword>
<keyword id="KW-0460">Magnesium</keyword>
<keyword id="KW-0464">Manganese</keyword>
<keyword id="KW-0479">Metal-binding</keyword>
<keyword id="KW-0520">NAD</keyword>
<keyword id="KW-0862">Zinc</keyword>
<name>DNLJ_YERPP</name>
<dbReference type="EC" id="6.5.1.2" evidence="1"/>
<dbReference type="EMBL" id="CP000668">
    <property type="protein sequence ID" value="ABP40476.1"/>
    <property type="molecule type" value="Genomic_DNA"/>
</dbReference>
<dbReference type="RefSeq" id="WP_002213368.1">
    <property type="nucleotide sequence ID" value="NZ_CP009715.1"/>
</dbReference>
<dbReference type="SMR" id="A4TMG4"/>
<dbReference type="GeneID" id="57975709"/>
<dbReference type="KEGG" id="ypp:YPDSF_2097"/>
<dbReference type="PATRIC" id="fig|386656.14.peg.3572"/>
<dbReference type="GO" id="GO:0005829">
    <property type="term" value="C:cytosol"/>
    <property type="evidence" value="ECO:0007669"/>
    <property type="project" value="TreeGrafter"/>
</dbReference>
<dbReference type="GO" id="GO:0003677">
    <property type="term" value="F:DNA binding"/>
    <property type="evidence" value="ECO:0007669"/>
    <property type="project" value="InterPro"/>
</dbReference>
<dbReference type="GO" id="GO:0003911">
    <property type="term" value="F:DNA ligase (NAD+) activity"/>
    <property type="evidence" value="ECO:0007669"/>
    <property type="project" value="UniProtKB-UniRule"/>
</dbReference>
<dbReference type="GO" id="GO:0046872">
    <property type="term" value="F:metal ion binding"/>
    <property type="evidence" value="ECO:0007669"/>
    <property type="project" value="UniProtKB-KW"/>
</dbReference>
<dbReference type="GO" id="GO:0006281">
    <property type="term" value="P:DNA repair"/>
    <property type="evidence" value="ECO:0007669"/>
    <property type="project" value="UniProtKB-KW"/>
</dbReference>
<dbReference type="GO" id="GO:0006260">
    <property type="term" value="P:DNA replication"/>
    <property type="evidence" value="ECO:0007669"/>
    <property type="project" value="UniProtKB-KW"/>
</dbReference>
<dbReference type="CDD" id="cd17748">
    <property type="entry name" value="BRCT_DNA_ligase_like"/>
    <property type="match status" value="1"/>
</dbReference>
<dbReference type="CDD" id="cd00114">
    <property type="entry name" value="LIGANc"/>
    <property type="match status" value="1"/>
</dbReference>
<dbReference type="FunFam" id="1.10.150.20:FF:000006">
    <property type="entry name" value="DNA ligase"/>
    <property type="match status" value="1"/>
</dbReference>
<dbReference type="FunFam" id="1.10.150.20:FF:000007">
    <property type="entry name" value="DNA ligase"/>
    <property type="match status" value="1"/>
</dbReference>
<dbReference type="FunFam" id="1.10.287.610:FF:000002">
    <property type="entry name" value="DNA ligase"/>
    <property type="match status" value="1"/>
</dbReference>
<dbReference type="FunFam" id="2.40.50.140:FF:000012">
    <property type="entry name" value="DNA ligase"/>
    <property type="match status" value="1"/>
</dbReference>
<dbReference type="FunFam" id="3.30.470.30:FF:000001">
    <property type="entry name" value="DNA ligase"/>
    <property type="match status" value="1"/>
</dbReference>
<dbReference type="FunFam" id="3.40.50.10190:FF:000004">
    <property type="entry name" value="DNA ligase"/>
    <property type="match status" value="1"/>
</dbReference>
<dbReference type="FunFam" id="6.20.10.30:FF:000001">
    <property type="entry name" value="DNA ligase"/>
    <property type="match status" value="1"/>
</dbReference>
<dbReference type="Gene3D" id="6.20.10.30">
    <property type="match status" value="1"/>
</dbReference>
<dbReference type="Gene3D" id="1.10.150.20">
    <property type="entry name" value="5' to 3' exonuclease, C-terminal subdomain"/>
    <property type="match status" value="2"/>
</dbReference>
<dbReference type="Gene3D" id="3.40.50.10190">
    <property type="entry name" value="BRCT domain"/>
    <property type="match status" value="1"/>
</dbReference>
<dbReference type="Gene3D" id="3.30.470.30">
    <property type="entry name" value="DNA ligase/mRNA capping enzyme"/>
    <property type="match status" value="1"/>
</dbReference>
<dbReference type="Gene3D" id="1.10.287.610">
    <property type="entry name" value="Helix hairpin bin"/>
    <property type="match status" value="1"/>
</dbReference>
<dbReference type="Gene3D" id="2.40.50.140">
    <property type="entry name" value="Nucleic acid-binding proteins"/>
    <property type="match status" value="1"/>
</dbReference>
<dbReference type="HAMAP" id="MF_01588">
    <property type="entry name" value="DNA_ligase_A"/>
    <property type="match status" value="1"/>
</dbReference>
<dbReference type="InterPro" id="IPR001357">
    <property type="entry name" value="BRCT_dom"/>
</dbReference>
<dbReference type="InterPro" id="IPR036420">
    <property type="entry name" value="BRCT_dom_sf"/>
</dbReference>
<dbReference type="InterPro" id="IPR041663">
    <property type="entry name" value="DisA/LigA_HHH"/>
</dbReference>
<dbReference type="InterPro" id="IPR001679">
    <property type="entry name" value="DNA_ligase"/>
</dbReference>
<dbReference type="InterPro" id="IPR018239">
    <property type="entry name" value="DNA_ligase_AS"/>
</dbReference>
<dbReference type="InterPro" id="IPR033136">
    <property type="entry name" value="DNA_ligase_CS"/>
</dbReference>
<dbReference type="InterPro" id="IPR013839">
    <property type="entry name" value="DNAligase_adenylation"/>
</dbReference>
<dbReference type="InterPro" id="IPR013840">
    <property type="entry name" value="DNAligase_N"/>
</dbReference>
<dbReference type="InterPro" id="IPR003583">
    <property type="entry name" value="Hlx-hairpin-Hlx_DNA-bd_motif"/>
</dbReference>
<dbReference type="InterPro" id="IPR012340">
    <property type="entry name" value="NA-bd_OB-fold"/>
</dbReference>
<dbReference type="InterPro" id="IPR004150">
    <property type="entry name" value="NAD_DNA_ligase_OB"/>
</dbReference>
<dbReference type="InterPro" id="IPR010994">
    <property type="entry name" value="RuvA_2-like"/>
</dbReference>
<dbReference type="InterPro" id="IPR004149">
    <property type="entry name" value="Znf_DNAligase_C4"/>
</dbReference>
<dbReference type="NCBIfam" id="TIGR00575">
    <property type="entry name" value="dnlj"/>
    <property type="match status" value="1"/>
</dbReference>
<dbReference type="NCBIfam" id="NF005932">
    <property type="entry name" value="PRK07956.1"/>
    <property type="match status" value="1"/>
</dbReference>
<dbReference type="PANTHER" id="PTHR23389">
    <property type="entry name" value="CHROMOSOME TRANSMISSION FIDELITY FACTOR 18"/>
    <property type="match status" value="1"/>
</dbReference>
<dbReference type="PANTHER" id="PTHR23389:SF9">
    <property type="entry name" value="DNA LIGASE"/>
    <property type="match status" value="1"/>
</dbReference>
<dbReference type="Pfam" id="PF00533">
    <property type="entry name" value="BRCT"/>
    <property type="match status" value="1"/>
</dbReference>
<dbReference type="Pfam" id="PF01653">
    <property type="entry name" value="DNA_ligase_aden"/>
    <property type="match status" value="1"/>
</dbReference>
<dbReference type="Pfam" id="PF03120">
    <property type="entry name" value="DNA_ligase_OB"/>
    <property type="match status" value="1"/>
</dbReference>
<dbReference type="Pfam" id="PF03119">
    <property type="entry name" value="DNA_ligase_ZBD"/>
    <property type="match status" value="1"/>
</dbReference>
<dbReference type="Pfam" id="PF12826">
    <property type="entry name" value="HHH_2"/>
    <property type="match status" value="1"/>
</dbReference>
<dbReference type="Pfam" id="PF14520">
    <property type="entry name" value="HHH_5"/>
    <property type="match status" value="1"/>
</dbReference>
<dbReference type="Pfam" id="PF22745">
    <property type="entry name" value="Nlig-Ia"/>
    <property type="match status" value="1"/>
</dbReference>
<dbReference type="PIRSF" id="PIRSF001604">
    <property type="entry name" value="LigA"/>
    <property type="match status" value="1"/>
</dbReference>
<dbReference type="SMART" id="SM00292">
    <property type="entry name" value="BRCT"/>
    <property type="match status" value="1"/>
</dbReference>
<dbReference type="SMART" id="SM00278">
    <property type="entry name" value="HhH1"/>
    <property type="match status" value="4"/>
</dbReference>
<dbReference type="SMART" id="SM00532">
    <property type="entry name" value="LIGANc"/>
    <property type="match status" value="1"/>
</dbReference>
<dbReference type="SUPFAM" id="SSF52113">
    <property type="entry name" value="BRCT domain"/>
    <property type="match status" value="1"/>
</dbReference>
<dbReference type="SUPFAM" id="SSF56091">
    <property type="entry name" value="DNA ligase/mRNA capping enzyme, catalytic domain"/>
    <property type="match status" value="1"/>
</dbReference>
<dbReference type="SUPFAM" id="SSF50249">
    <property type="entry name" value="Nucleic acid-binding proteins"/>
    <property type="match status" value="1"/>
</dbReference>
<dbReference type="SUPFAM" id="SSF47781">
    <property type="entry name" value="RuvA domain 2-like"/>
    <property type="match status" value="1"/>
</dbReference>
<dbReference type="PROSITE" id="PS50172">
    <property type="entry name" value="BRCT"/>
    <property type="match status" value="1"/>
</dbReference>
<dbReference type="PROSITE" id="PS01055">
    <property type="entry name" value="DNA_LIGASE_N1"/>
    <property type="match status" value="1"/>
</dbReference>
<dbReference type="PROSITE" id="PS01056">
    <property type="entry name" value="DNA_LIGASE_N2"/>
    <property type="match status" value="1"/>
</dbReference>
<evidence type="ECO:0000255" key="1">
    <source>
        <dbReference type="HAMAP-Rule" id="MF_01588"/>
    </source>
</evidence>
<reference key="1">
    <citation type="submission" date="2007-02" db="EMBL/GenBank/DDBJ databases">
        <title>Complete sequence of chromosome of Yersinia pestis Pestoides F.</title>
        <authorList>
            <consortium name="US DOE Joint Genome Institute"/>
            <person name="Copeland A."/>
            <person name="Lucas S."/>
            <person name="Lapidus A."/>
            <person name="Barry K."/>
            <person name="Detter J.C."/>
            <person name="Glavina del Rio T."/>
            <person name="Hammon N."/>
            <person name="Israni S."/>
            <person name="Dalin E."/>
            <person name="Tice H."/>
            <person name="Pitluck S."/>
            <person name="Di Bartolo G."/>
            <person name="Chain P."/>
            <person name="Malfatti S."/>
            <person name="Shin M."/>
            <person name="Vergez L."/>
            <person name="Schmutz J."/>
            <person name="Larimer F."/>
            <person name="Land M."/>
            <person name="Hauser L."/>
            <person name="Worsham P."/>
            <person name="Chu M."/>
            <person name="Bearden S."/>
            <person name="Garcia E."/>
            <person name="Richardson P."/>
        </authorList>
    </citation>
    <scope>NUCLEOTIDE SEQUENCE [LARGE SCALE GENOMIC DNA]</scope>
    <source>
        <strain>Pestoides F</strain>
    </source>
</reference>
<organism>
    <name type="scientific">Yersinia pestis (strain Pestoides F)</name>
    <dbReference type="NCBI Taxonomy" id="386656"/>
    <lineage>
        <taxon>Bacteria</taxon>
        <taxon>Pseudomonadati</taxon>
        <taxon>Pseudomonadota</taxon>
        <taxon>Gammaproteobacteria</taxon>
        <taxon>Enterobacterales</taxon>
        <taxon>Yersiniaceae</taxon>
        <taxon>Yersinia</taxon>
    </lineage>
</organism>
<proteinExistence type="inferred from homology"/>
<protein>
    <recommendedName>
        <fullName evidence="1">DNA ligase</fullName>
        <ecNumber evidence="1">6.5.1.2</ecNumber>
    </recommendedName>
    <alternativeName>
        <fullName evidence="1">Polydeoxyribonucleotide synthase [NAD(+)]</fullName>
    </alternativeName>
</protein>
<sequence length="670" mass="73898">MESIIQQINQLRTSLRHHEHQYHVLDAPEIPDAEYDRMMQQLRDLEAQHPELVTNDSPTQRVGAAPLDAFEQVKHEVPMLSLDNVFDEESYLAFDKRVHDRLKTAEPLTFCCELKLDGLAVSLLYENGELVRAATRGDGTTGENITANVRTIRAIPLRLHGDNVPRRVEVRGEVFMPQAGFEQLNEEARRKGGKVFANPRNAAAGSLRQLDPRITAKRPLTFFCYGVGLLDGGELPRSHIQCLMQFKAWGLPVSERVKLCTGSDQVIAFYRQIEQDRAGLGFDIDGVVIKVDDLALQEQLGFVARAPRWATAFKFPAQEQITQVREVEFQVGRTGAITPVARLEPVQVAGVIVSNATLHNADEIERLGLRIGDTVIVRRAGDVIPQVVGVVMEQRPDDTKEITFPSQCPVCGSDIERVEGEAVARCTGGLFCAAQRKEALKHFVSRRALDVDGMGDKIIEQLVEKQYVENPADLFQLTAGKLTGLDRMGPKSAQNLIAALEKAKQTTFARFLYALGIREVGEATAANLAAHFRTLDNLRAADIETLKSVPDVGEVVAKHVMNFLSEEHNQKVIEELEKVVSWPEPQQIVVEESDSPFAGKTVVLTGSLTILSRDEAKDRLTALGAKVSGSVSKKTHLVIAGEAAGSKLAKAQELGIKVIDEAEMIRLLGE</sequence>
<feature type="chain" id="PRO_0000313526" description="DNA ligase">
    <location>
        <begin position="1"/>
        <end position="670"/>
    </location>
</feature>
<feature type="domain" description="BRCT" evidence="1">
    <location>
        <begin position="592"/>
        <end position="670"/>
    </location>
</feature>
<feature type="active site" description="N6-AMP-lysine intermediate" evidence="1">
    <location>
        <position position="115"/>
    </location>
</feature>
<feature type="binding site" evidence="1">
    <location>
        <begin position="32"/>
        <end position="36"/>
    </location>
    <ligand>
        <name>NAD(+)</name>
        <dbReference type="ChEBI" id="CHEBI:57540"/>
    </ligand>
</feature>
<feature type="binding site" evidence="1">
    <location>
        <begin position="81"/>
        <end position="82"/>
    </location>
    <ligand>
        <name>NAD(+)</name>
        <dbReference type="ChEBI" id="CHEBI:57540"/>
    </ligand>
</feature>
<feature type="binding site" evidence="1">
    <location>
        <position position="113"/>
    </location>
    <ligand>
        <name>NAD(+)</name>
        <dbReference type="ChEBI" id="CHEBI:57540"/>
    </ligand>
</feature>
<feature type="binding site" evidence="1">
    <location>
        <position position="136"/>
    </location>
    <ligand>
        <name>NAD(+)</name>
        <dbReference type="ChEBI" id="CHEBI:57540"/>
    </ligand>
</feature>
<feature type="binding site" evidence="1">
    <location>
        <position position="173"/>
    </location>
    <ligand>
        <name>NAD(+)</name>
        <dbReference type="ChEBI" id="CHEBI:57540"/>
    </ligand>
</feature>
<feature type="binding site" evidence="1">
    <location>
        <position position="290"/>
    </location>
    <ligand>
        <name>NAD(+)</name>
        <dbReference type="ChEBI" id="CHEBI:57540"/>
    </ligand>
</feature>
<feature type="binding site" evidence="1">
    <location>
        <position position="314"/>
    </location>
    <ligand>
        <name>NAD(+)</name>
        <dbReference type="ChEBI" id="CHEBI:57540"/>
    </ligand>
</feature>
<feature type="binding site" evidence="1">
    <location>
        <position position="408"/>
    </location>
    <ligand>
        <name>Zn(2+)</name>
        <dbReference type="ChEBI" id="CHEBI:29105"/>
    </ligand>
</feature>
<feature type="binding site" evidence="1">
    <location>
        <position position="411"/>
    </location>
    <ligand>
        <name>Zn(2+)</name>
        <dbReference type="ChEBI" id="CHEBI:29105"/>
    </ligand>
</feature>
<feature type="binding site" evidence="1">
    <location>
        <position position="426"/>
    </location>
    <ligand>
        <name>Zn(2+)</name>
        <dbReference type="ChEBI" id="CHEBI:29105"/>
    </ligand>
</feature>
<feature type="binding site" evidence="1">
    <location>
        <position position="432"/>
    </location>
    <ligand>
        <name>Zn(2+)</name>
        <dbReference type="ChEBI" id="CHEBI:29105"/>
    </ligand>
</feature>
<accession>A4TMG4</accession>
<gene>
    <name evidence="1" type="primary">ligA</name>
    <name type="ordered locus">YPDSF_2097</name>
</gene>